<proteinExistence type="inferred from homology"/>
<feature type="chain" id="PRO_0000364855" description="Ferredoxin--NADP reductase">
    <location>
        <begin position="1"/>
        <end position="310"/>
    </location>
</feature>
<feature type="binding site" evidence="1">
    <location>
        <position position="26"/>
    </location>
    <ligand>
        <name>FAD</name>
        <dbReference type="ChEBI" id="CHEBI:57692"/>
    </ligand>
</feature>
<feature type="binding site" evidence="1">
    <location>
        <position position="34"/>
    </location>
    <ligand>
        <name>FAD</name>
        <dbReference type="ChEBI" id="CHEBI:57692"/>
    </ligand>
</feature>
<feature type="binding site" evidence="1">
    <location>
        <position position="39"/>
    </location>
    <ligand>
        <name>FAD</name>
        <dbReference type="ChEBI" id="CHEBI:57692"/>
    </ligand>
</feature>
<feature type="binding site" evidence="1">
    <location>
        <position position="78"/>
    </location>
    <ligand>
        <name>FAD</name>
        <dbReference type="ChEBI" id="CHEBI:57692"/>
    </ligand>
</feature>
<feature type="binding site" evidence="1">
    <location>
        <position position="108"/>
    </location>
    <ligand>
        <name>FAD</name>
        <dbReference type="ChEBI" id="CHEBI:57692"/>
    </ligand>
</feature>
<feature type="binding site" evidence="1">
    <location>
        <position position="268"/>
    </location>
    <ligand>
        <name>FAD</name>
        <dbReference type="ChEBI" id="CHEBI:57692"/>
    </ligand>
</feature>
<feature type="binding site" evidence="1">
    <location>
        <position position="308"/>
    </location>
    <ligand>
        <name>FAD</name>
        <dbReference type="ChEBI" id="CHEBI:57692"/>
    </ligand>
</feature>
<gene>
    <name type="ordered locus">lhv_0465</name>
</gene>
<reference key="1">
    <citation type="journal article" date="2008" name="J. Bacteriol.">
        <title>Genome sequence of Lactobacillus helveticus: an organism distinguished by selective gene loss and IS element expansion.</title>
        <authorList>
            <person name="Callanan M."/>
            <person name="Kaleta P."/>
            <person name="O'Callaghan J."/>
            <person name="O'Sullivan O."/>
            <person name="Jordan K."/>
            <person name="McAuliffe O."/>
            <person name="Sangrador-Vegas A."/>
            <person name="Slattery L."/>
            <person name="Fitzgerald G.F."/>
            <person name="Beresford T."/>
            <person name="Ross R.P."/>
        </authorList>
    </citation>
    <scope>NUCLEOTIDE SEQUENCE [LARGE SCALE GENOMIC DNA]</scope>
    <source>
        <strain>DPC 4571</strain>
    </source>
</reference>
<sequence>MIGAGPVGLFAAHFAHLHGLSSLIFDSLSEVGGQPQMLYPFKKISDIPAYNSINGTALIQNLKSGLPKETEIITNHKVNDIKKNADGFVLDNVVLAKSIIIATGAGAFKPKELPLKMRDEIQKRVHYFIKDPKDFANQKIGVFGGGNSALDLAIELANYANVKIIHRRNEFRGLELNVKKLRSLTNVEILTPYLPKDIQLINNQLDITLKGMGDVQSRHEQFDQIVVAYGFKADNRFIKNWGIELNGTNIAVDPTMKTNIDGIYAAGDVVSYPGRVPLIALGFGEAQIAITSIMRDLFPEKTLTIHSTSI</sequence>
<evidence type="ECO:0000255" key="1">
    <source>
        <dbReference type="HAMAP-Rule" id="MF_01685"/>
    </source>
</evidence>
<evidence type="ECO:0000305" key="2"/>
<accession>A8YTT2</accession>
<protein>
    <recommendedName>
        <fullName evidence="1">Ferredoxin--NADP reductase</fullName>
        <shortName evidence="1">FNR</shortName>
        <shortName evidence="1">Fd-NADP(+) reductase</shortName>
        <ecNumber evidence="1">1.18.1.2</ecNumber>
    </recommendedName>
</protein>
<keyword id="KW-0274">FAD</keyword>
<keyword id="KW-0285">Flavoprotein</keyword>
<keyword id="KW-0521">NADP</keyword>
<keyword id="KW-0560">Oxidoreductase</keyword>
<name>FENR_LACH4</name>
<dbReference type="EC" id="1.18.1.2" evidence="1"/>
<dbReference type="EMBL" id="CP000517">
    <property type="protein sequence ID" value="ABX26673.1"/>
    <property type="status" value="ALT_INIT"/>
    <property type="molecule type" value="Genomic_DNA"/>
</dbReference>
<dbReference type="SMR" id="A8YTT2"/>
<dbReference type="KEGG" id="lhe:lhv_0465"/>
<dbReference type="eggNOG" id="COG0492">
    <property type="taxonomic scope" value="Bacteria"/>
</dbReference>
<dbReference type="HOGENOM" id="CLU_031864_5_5_9"/>
<dbReference type="Proteomes" id="UP000000790">
    <property type="component" value="Chromosome"/>
</dbReference>
<dbReference type="GO" id="GO:0004324">
    <property type="term" value="F:ferredoxin-NADP+ reductase activity"/>
    <property type="evidence" value="ECO:0007669"/>
    <property type="project" value="UniProtKB-UniRule"/>
</dbReference>
<dbReference type="GO" id="GO:0050660">
    <property type="term" value="F:flavin adenine dinucleotide binding"/>
    <property type="evidence" value="ECO:0007669"/>
    <property type="project" value="UniProtKB-UniRule"/>
</dbReference>
<dbReference type="GO" id="GO:0050661">
    <property type="term" value="F:NADP binding"/>
    <property type="evidence" value="ECO:0007669"/>
    <property type="project" value="UniProtKB-UniRule"/>
</dbReference>
<dbReference type="Gene3D" id="3.50.50.60">
    <property type="entry name" value="FAD/NAD(P)-binding domain"/>
    <property type="match status" value="2"/>
</dbReference>
<dbReference type="HAMAP" id="MF_01685">
    <property type="entry name" value="FENR2"/>
    <property type="match status" value="1"/>
</dbReference>
<dbReference type="InterPro" id="IPR036188">
    <property type="entry name" value="FAD/NAD-bd_sf"/>
</dbReference>
<dbReference type="InterPro" id="IPR023753">
    <property type="entry name" value="FAD/NAD-binding_dom"/>
</dbReference>
<dbReference type="InterPro" id="IPR022890">
    <property type="entry name" value="Fd--NADP_Rdtase_type_2"/>
</dbReference>
<dbReference type="InterPro" id="IPR050097">
    <property type="entry name" value="Ferredoxin-NADP_redctase_2"/>
</dbReference>
<dbReference type="PANTHER" id="PTHR48105">
    <property type="entry name" value="THIOREDOXIN REDUCTASE 1-RELATED-RELATED"/>
    <property type="match status" value="1"/>
</dbReference>
<dbReference type="Pfam" id="PF07992">
    <property type="entry name" value="Pyr_redox_2"/>
    <property type="match status" value="1"/>
</dbReference>
<dbReference type="PRINTS" id="PR00368">
    <property type="entry name" value="FADPNR"/>
</dbReference>
<dbReference type="PRINTS" id="PR00469">
    <property type="entry name" value="PNDRDTASEII"/>
</dbReference>
<dbReference type="SUPFAM" id="SSF51905">
    <property type="entry name" value="FAD/NAD(P)-binding domain"/>
    <property type="match status" value="1"/>
</dbReference>
<comment type="catalytic activity">
    <reaction evidence="1">
        <text>2 reduced [2Fe-2S]-[ferredoxin] + NADP(+) + H(+) = 2 oxidized [2Fe-2S]-[ferredoxin] + NADPH</text>
        <dbReference type="Rhea" id="RHEA:20125"/>
        <dbReference type="Rhea" id="RHEA-COMP:10000"/>
        <dbReference type="Rhea" id="RHEA-COMP:10001"/>
        <dbReference type="ChEBI" id="CHEBI:15378"/>
        <dbReference type="ChEBI" id="CHEBI:33737"/>
        <dbReference type="ChEBI" id="CHEBI:33738"/>
        <dbReference type="ChEBI" id="CHEBI:57783"/>
        <dbReference type="ChEBI" id="CHEBI:58349"/>
        <dbReference type="EC" id="1.18.1.2"/>
    </reaction>
</comment>
<comment type="cofactor">
    <cofactor evidence="1">
        <name>FAD</name>
        <dbReference type="ChEBI" id="CHEBI:57692"/>
    </cofactor>
    <text evidence="1">Binds 1 FAD per subunit.</text>
</comment>
<comment type="subunit">
    <text evidence="1">Homodimer.</text>
</comment>
<comment type="similarity">
    <text evidence="1">Belongs to the ferredoxin--NADP reductase type 2 family.</text>
</comment>
<comment type="sequence caution" evidence="2">
    <conflict type="erroneous initiation">
        <sequence resource="EMBL-CDS" id="ABX26673"/>
    </conflict>
</comment>
<organism>
    <name type="scientific">Lactobacillus helveticus (strain DPC 4571)</name>
    <dbReference type="NCBI Taxonomy" id="405566"/>
    <lineage>
        <taxon>Bacteria</taxon>
        <taxon>Bacillati</taxon>
        <taxon>Bacillota</taxon>
        <taxon>Bacilli</taxon>
        <taxon>Lactobacillales</taxon>
        <taxon>Lactobacillaceae</taxon>
        <taxon>Lactobacillus</taxon>
    </lineage>
</organism>